<gene>
    <name evidence="1" type="primary">cobS</name>
    <name type="ordered locus">M1425_2132</name>
</gene>
<keyword id="KW-1003">Cell membrane</keyword>
<keyword id="KW-0169">Cobalamin biosynthesis</keyword>
<keyword id="KW-0460">Magnesium</keyword>
<keyword id="KW-0472">Membrane</keyword>
<keyword id="KW-0808">Transferase</keyword>
<keyword id="KW-0812">Transmembrane</keyword>
<keyword id="KW-1133">Transmembrane helix</keyword>
<comment type="function">
    <text evidence="1">Joins adenosylcobinamide-GDP and alpha-ribazole to generate adenosylcobalamin (Ado-cobalamin). Also synthesizes adenosylcobalamin 5'-phosphate from adenosylcobinamide-GDP and alpha-ribazole 5'-phosphate.</text>
</comment>
<comment type="catalytic activity">
    <reaction evidence="1">
        <text>alpha-ribazole + adenosylcob(III)inamide-GDP = adenosylcob(III)alamin + GMP + H(+)</text>
        <dbReference type="Rhea" id="RHEA:16049"/>
        <dbReference type="ChEBI" id="CHEBI:10329"/>
        <dbReference type="ChEBI" id="CHEBI:15378"/>
        <dbReference type="ChEBI" id="CHEBI:18408"/>
        <dbReference type="ChEBI" id="CHEBI:58115"/>
        <dbReference type="ChEBI" id="CHEBI:60487"/>
        <dbReference type="EC" id="2.7.8.26"/>
    </reaction>
</comment>
<comment type="catalytic activity">
    <reaction evidence="1">
        <text>alpha-ribazole 5'-phosphate + adenosylcob(III)inamide-GDP = adenosylcob(III)alamin 5'-phosphate + GMP + H(+)</text>
        <dbReference type="Rhea" id="RHEA:23560"/>
        <dbReference type="ChEBI" id="CHEBI:15378"/>
        <dbReference type="ChEBI" id="CHEBI:57918"/>
        <dbReference type="ChEBI" id="CHEBI:58115"/>
        <dbReference type="ChEBI" id="CHEBI:60487"/>
        <dbReference type="ChEBI" id="CHEBI:60493"/>
        <dbReference type="EC" id="2.7.8.26"/>
    </reaction>
</comment>
<comment type="cofactor">
    <cofactor evidence="1">
        <name>Mg(2+)</name>
        <dbReference type="ChEBI" id="CHEBI:18420"/>
    </cofactor>
</comment>
<comment type="pathway">
    <text evidence="1">Cofactor biosynthesis; adenosylcobalamin biosynthesis; adenosylcobalamin from cob(II)yrinate a,c-diamide: step 7/7.</text>
</comment>
<comment type="subcellular location">
    <subcellularLocation>
        <location evidence="1">Cell membrane</location>
        <topology evidence="1">Multi-pass membrane protein</topology>
    </subcellularLocation>
</comment>
<comment type="similarity">
    <text evidence="1">Belongs to the CobS family.</text>
</comment>
<reference key="1">
    <citation type="journal article" date="2009" name="Proc. Natl. Acad. Sci. U.S.A.">
        <title>Biogeography of the Sulfolobus islandicus pan-genome.</title>
        <authorList>
            <person name="Reno M.L."/>
            <person name="Held N.L."/>
            <person name="Fields C.J."/>
            <person name="Burke P.V."/>
            <person name="Whitaker R.J."/>
        </authorList>
    </citation>
    <scope>NUCLEOTIDE SEQUENCE [LARGE SCALE GENOMIC DNA]</scope>
    <source>
        <strain>M.14.25 / Kamchatka #1</strain>
    </source>
</reference>
<sequence>MRLKGVLALFSFFTAIPIKSNASLEEIAEYSYISPLIIGISLALIESAVYVLLYRILEALAGIVLLGVVELLRGFNHLDGLLDLGDALMIKGDRERKIKALKDVEIGSGGIGLLLVYLSIQIVALLKLGFSFYTIFYLISSNVLSMTIGLYILSTISPIPESNLGKIFHNKLKGKSTVLLFELIPFISLYNIIVFLVFYMIMHKICRSLGGSSGDIAGASITLSFPLFLLTNEITNLNYSLLSILCYLFLYLH</sequence>
<name>COBS_SACI4</name>
<organism>
    <name type="scientific">Saccharolobus islandicus (strain M.14.25 / Kamchatka #1)</name>
    <name type="common">Sulfolobus islandicus</name>
    <dbReference type="NCBI Taxonomy" id="427317"/>
    <lineage>
        <taxon>Archaea</taxon>
        <taxon>Thermoproteota</taxon>
        <taxon>Thermoprotei</taxon>
        <taxon>Sulfolobales</taxon>
        <taxon>Sulfolobaceae</taxon>
        <taxon>Saccharolobus</taxon>
    </lineage>
</organism>
<feature type="chain" id="PRO_1000212699" description="Adenosylcobinamide-GDP ribazoletransferase">
    <location>
        <begin position="1"/>
        <end position="253"/>
    </location>
</feature>
<feature type="transmembrane region" description="Helical" evidence="1">
    <location>
        <begin position="33"/>
        <end position="53"/>
    </location>
</feature>
<feature type="transmembrane region" description="Helical" evidence="1">
    <location>
        <begin position="56"/>
        <end position="76"/>
    </location>
</feature>
<feature type="transmembrane region" description="Helical" evidence="1">
    <location>
        <begin position="106"/>
        <end position="126"/>
    </location>
</feature>
<feature type="transmembrane region" description="Helical" evidence="1">
    <location>
        <begin position="132"/>
        <end position="152"/>
    </location>
</feature>
<feature type="transmembrane region" description="Helical" evidence="1">
    <location>
        <begin position="178"/>
        <end position="198"/>
    </location>
</feature>
<feature type="transmembrane region" description="Helical" evidence="1">
    <location>
        <begin position="209"/>
        <end position="229"/>
    </location>
</feature>
<feature type="transmembrane region" description="Helical" evidence="1">
    <location>
        <begin position="233"/>
        <end position="253"/>
    </location>
</feature>
<evidence type="ECO:0000255" key="1">
    <source>
        <dbReference type="HAMAP-Rule" id="MF_00719"/>
    </source>
</evidence>
<protein>
    <recommendedName>
        <fullName evidence="1">Adenosylcobinamide-GDP ribazoletransferase</fullName>
        <ecNumber evidence="1">2.7.8.26</ecNumber>
    </recommendedName>
    <alternativeName>
        <fullName evidence="1">Cobalamin synthase</fullName>
    </alternativeName>
    <alternativeName>
        <fullName evidence="1">Cobalamin-5'-phosphate synthase</fullName>
    </alternativeName>
</protein>
<accession>C3MRS8</accession>
<proteinExistence type="inferred from homology"/>
<dbReference type="EC" id="2.7.8.26" evidence="1"/>
<dbReference type="EMBL" id="CP001400">
    <property type="protein sequence ID" value="ACP38871.1"/>
    <property type="molecule type" value="Genomic_DNA"/>
</dbReference>
<dbReference type="RefSeq" id="WP_012712096.1">
    <property type="nucleotide sequence ID" value="NC_012588.1"/>
</dbReference>
<dbReference type="GeneID" id="84059475"/>
<dbReference type="KEGG" id="sia:M1425_2132"/>
<dbReference type="HOGENOM" id="CLU_057426_2_0_2"/>
<dbReference type="UniPathway" id="UPA00148">
    <property type="reaction ID" value="UER00238"/>
</dbReference>
<dbReference type="Proteomes" id="UP000001350">
    <property type="component" value="Chromosome"/>
</dbReference>
<dbReference type="GO" id="GO:0005886">
    <property type="term" value="C:plasma membrane"/>
    <property type="evidence" value="ECO:0007669"/>
    <property type="project" value="UniProtKB-SubCell"/>
</dbReference>
<dbReference type="GO" id="GO:0051073">
    <property type="term" value="F:adenosylcobinamide-GDP ribazoletransferase activity"/>
    <property type="evidence" value="ECO:0007669"/>
    <property type="project" value="UniProtKB-UniRule"/>
</dbReference>
<dbReference type="GO" id="GO:0008818">
    <property type="term" value="F:cobalamin 5'-phosphate synthase activity"/>
    <property type="evidence" value="ECO:0007669"/>
    <property type="project" value="UniProtKB-UniRule"/>
</dbReference>
<dbReference type="GO" id="GO:0009236">
    <property type="term" value="P:cobalamin biosynthetic process"/>
    <property type="evidence" value="ECO:0007669"/>
    <property type="project" value="UniProtKB-UniRule"/>
</dbReference>
<dbReference type="HAMAP" id="MF_00719">
    <property type="entry name" value="CobS"/>
    <property type="match status" value="1"/>
</dbReference>
<dbReference type="InterPro" id="IPR003805">
    <property type="entry name" value="CobS"/>
</dbReference>
<dbReference type="NCBIfam" id="TIGR00317">
    <property type="entry name" value="cobS"/>
    <property type="match status" value="1"/>
</dbReference>
<dbReference type="PANTHER" id="PTHR34148">
    <property type="entry name" value="ADENOSYLCOBINAMIDE-GDP RIBAZOLETRANSFERASE"/>
    <property type="match status" value="1"/>
</dbReference>
<dbReference type="PANTHER" id="PTHR34148:SF1">
    <property type="entry name" value="ADENOSYLCOBINAMIDE-GDP RIBAZOLETRANSFERASE"/>
    <property type="match status" value="1"/>
</dbReference>
<dbReference type="Pfam" id="PF02654">
    <property type="entry name" value="CobS"/>
    <property type="match status" value="1"/>
</dbReference>